<feature type="chain" id="PRO_0000182198" description="Arginine deiminase">
    <location>
        <begin position="1"/>
        <end position="410"/>
    </location>
</feature>
<feature type="active site" description="Amidino-cysteine intermediate" evidence="1">
    <location>
        <position position="400"/>
    </location>
</feature>
<evidence type="ECO:0000255" key="1">
    <source>
        <dbReference type="HAMAP-Rule" id="MF_00242"/>
    </source>
</evidence>
<organism>
    <name type="scientific">Bacillus cereus (strain ATCC 10987 / NRS 248)</name>
    <dbReference type="NCBI Taxonomy" id="222523"/>
    <lineage>
        <taxon>Bacteria</taxon>
        <taxon>Bacillati</taxon>
        <taxon>Bacillota</taxon>
        <taxon>Bacilli</taxon>
        <taxon>Bacillales</taxon>
        <taxon>Bacillaceae</taxon>
        <taxon>Bacillus</taxon>
        <taxon>Bacillus cereus group</taxon>
    </lineage>
</organism>
<reference key="1">
    <citation type="journal article" date="2004" name="Nucleic Acids Res.">
        <title>The genome sequence of Bacillus cereus ATCC 10987 reveals metabolic adaptations and a large plasmid related to Bacillus anthracis pXO1.</title>
        <authorList>
            <person name="Rasko D.A."/>
            <person name="Ravel J."/>
            <person name="Oekstad O.A."/>
            <person name="Helgason E."/>
            <person name="Cer R.Z."/>
            <person name="Jiang L."/>
            <person name="Shores K.A."/>
            <person name="Fouts D.E."/>
            <person name="Tourasse N.J."/>
            <person name="Angiuoli S.V."/>
            <person name="Kolonay J.F."/>
            <person name="Nelson W.C."/>
            <person name="Kolstoe A.-B."/>
            <person name="Fraser C.M."/>
            <person name="Read T.D."/>
        </authorList>
    </citation>
    <scope>NUCLEOTIDE SEQUENCE [LARGE SCALE GENOMIC DNA]</scope>
    <source>
        <strain>ATCC 10987 / NRS 248</strain>
    </source>
</reference>
<accession>Q73E87</accession>
<proteinExistence type="inferred from homology"/>
<dbReference type="EC" id="3.5.3.6" evidence="1"/>
<dbReference type="EMBL" id="AE017194">
    <property type="protein sequence ID" value="AAS39407.1"/>
    <property type="molecule type" value="Genomic_DNA"/>
</dbReference>
<dbReference type="SMR" id="Q73E87"/>
<dbReference type="KEGG" id="bca:BCE_0472"/>
<dbReference type="HOGENOM" id="CLU_052662_0_1_9"/>
<dbReference type="UniPathway" id="UPA00254">
    <property type="reaction ID" value="UER00364"/>
</dbReference>
<dbReference type="Proteomes" id="UP000002527">
    <property type="component" value="Chromosome"/>
</dbReference>
<dbReference type="GO" id="GO:0005737">
    <property type="term" value="C:cytoplasm"/>
    <property type="evidence" value="ECO:0007669"/>
    <property type="project" value="UniProtKB-SubCell"/>
</dbReference>
<dbReference type="GO" id="GO:0016990">
    <property type="term" value="F:arginine deiminase activity"/>
    <property type="evidence" value="ECO:0007669"/>
    <property type="project" value="UniProtKB-UniRule"/>
</dbReference>
<dbReference type="GO" id="GO:0019547">
    <property type="term" value="P:arginine catabolic process to ornithine"/>
    <property type="evidence" value="ECO:0007669"/>
    <property type="project" value="UniProtKB-UniRule"/>
</dbReference>
<dbReference type="GO" id="GO:0019546">
    <property type="term" value="P:arginine deiminase pathway"/>
    <property type="evidence" value="ECO:0007669"/>
    <property type="project" value="TreeGrafter"/>
</dbReference>
<dbReference type="FunFam" id="1.10.3930.10:FF:000001">
    <property type="entry name" value="Arginine deiminase"/>
    <property type="match status" value="1"/>
</dbReference>
<dbReference type="Gene3D" id="1.10.3930.10">
    <property type="entry name" value="Arginine deiminase"/>
    <property type="match status" value="1"/>
</dbReference>
<dbReference type="Gene3D" id="3.75.10.10">
    <property type="entry name" value="L-arginine/glycine Amidinotransferase, Chain A"/>
    <property type="match status" value="1"/>
</dbReference>
<dbReference type="HAMAP" id="MF_00242">
    <property type="entry name" value="Arg_deiminase"/>
    <property type="match status" value="1"/>
</dbReference>
<dbReference type="InterPro" id="IPR003876">
    <property type="entry name" value="Arg_deiminase"/>
</dbReference>
<dbReference type="NCBIfam" id="TIGR01078">
    <property type="entry name" value="arcA"/>
    <property type="match status" value="1"/>
</dbReference>
<dbReference type="NCBIfam" id="NF002381">
    <property type="entry name" value="PRK01388.1"/>
    <property type="match status" value="1"/>
</dbReference>
<dbReference type="PANTHER" id="PTHR47271">
    <property type="entry name" value="ARGININE DEIMINASE"/>
    <property type="match status" value="1"/>
</dbReference>
<dbReference type="PANTHER" id="PTHR47271:SF2">
    <property type="entry name" value="ARGININE DEIMINASE"/>
    <property type="match status" value="1"/>
</dbReference>
<dbReference type="Pfam" id="PF02274">
    <property type="entry name" value="ADI"/>
    <property type="match status" value="1"/>
</dbReference>
<dbReference type="PIRSF" id="PIRSF006356">
    <property type="entry name" value="Arg_deiminase"/>
    <property type="match status" value="1"/>
</dbReference>
<dbReference type="PRINTS" id="PR01466">
    <property type="entry name" value="ARGDEIMINASE"/>
</dbReference>
<dbReference type="SUPFAM" id="SSF55909">
    <property type="entry name" value="Pentein"/>
    <property type="match status" value="1"/>
</dbReference>
<sequence>MKHPIHVTSEIGELQTVLLKRPGKEVENLTPDYLQQLLFDDIPYLPIIQKEHDYFAQTLRNRGVEVLYLEKLAAEALVDKKLREEFVDRILKEGQADVNVAHQTLKEYLLSFSNEELIQKIMGGVRKNEIETSKKTHLYELMEDHYPFYLDPMPNLYFTRDPAASVGDGLTINKMREPARRRESLFMEYIIKYHPRFEKHNVPIWLDRDYKFPIEGGDELILNEETIAIGVSARTSAKAIERLAKNLFSRQNKIKKVLAIEIPKCRAFMHLDTVFTMVDYDKFTIHPAIQGPKGNMNIYILEKGSDEETLKITHRTSLMEALKEVLGLSELVLIPCGGGDVIASAREQWNDGSNTLAIAPGVVVTYDRNYVSNTLLREHGIEVIEVLSSELSRGRGGPRCMSMPIVRKDI</sequence>
<comment type="catalytic activity">
    <reaction evidence="1">
        <text>L-arginine + H2O = L-citrulline + NH4(+)</text>
        <dbReference type="Rhea" id="RHEA:19597"/>
        <dbReference type="ChEBI" id="CHEBI:15377"/>
        <dbReference type="ChEBI" id="CHEBI:28938"/>
        <dbReference type="ChEBI" id="CHEBI:32682"/>
        <dbReference type="ChEBI" id="CHEBI:57743"/>
        <dbReference type="EC" id="3.5.3.6"/>
    </reaction>
</comment>
<comment type="pathway">
    <text evidence="1">Amino-acid degradation; L-arginine degradation via ADI pathway; carbamoyl phosphate from L-arginine: step 1/2.</text>
</comment>
<comment type="subcellular location">
    <subcellularLocation>
        <location evidence="1">Cytoplasm</location>
    </subcellularLocation>
</comment>
<comment type="similarity">
    <text evidence="1">Belongs to the arginine deiminase family.</text>
</comment>
<keyword id="KW-0056">Arginine metabolism</keyword>
<keyword id="KW-0963">Cytoplasm</keyword>
<keyword id="KW-0378">Hydrolase</keyword>
<name>ARCA_BACC1</name>
<gene>
    <name evidence="1" type="primary">arcA</name>
    <name type="ordered locus">BCE_0472</name>
</gene>
<protein>
    <recommendedName>
        <fullName evidence="1">Arginine deiminase</fullName>
        <shortName evidence="1">ADI</shortName>
        <ecNumber evidence="1">3.5.3.6</ecNumber>
    </recommendedName>
    <alternativeName>
        <fullName evidence="1">Arginine dihydrolase</fullName>
        <shortName evidence="1">AD</shortName>
    </alternativeName>
</protein>